<sequence>MLLTKREKHLLAAFQNYGKLSLKQMIDLLKVSQRTVYRTISDLTDSLNTINISIIKENQNYFLVGELANLASIISLDTYEQYERLNLITYKLLMSFSSITNEQLQEEFNVSNVTIIQDIAEIEKRLADFDLRLDRKKGYRLVGNKNTLRRLLAILLTNNLSISDFGAGAYGHFEVLDKAKLELAKQIFQSSQEDLPDLDAKMSEFFIILLALSGWRDNEAVGHSISKAALDFSQKVYTEFSQKTNQFYSIQEILYYASILDELVIKRQETPLFHEKFDSAFFYNISNLIDKVSLYTKINFAKDKTLFHFLFNHIRLNLAVPQIFEDKSNNTIAHEVVQGNEYLHRVVSLLVQDIFPKYLQKEPEYELITLHFASSLRRSPDIYPIKILLLTDERPLARELLITRIKTIAPFVDKVVVKELAQYETKDKDYYNCVLATKPLVDKAVKMVSTYPDAKEMLQLQDYLQNVQAHQKIIIRDEQTNKQGYNLQNYFLATQQLLQEFSYQEIDNPADFETSVPKIMETIAAVSDKTYLSSKLLKCFAVSPLAIPETHLALLHTQSSKVITSCFKIYDLKRPVTALSMNYEKETVTRILVMLTRLDETKEMRDLMTAISQSIIENHLYTEIYKTGNKDIIYQLLNQIFTEKIKKLET</sequence>
<evidence type="ECO:0000255" key="1">
    <source>
        <dbReference type="PROSITE-ProRule" id="PRU00417"/>
    </source>
</evidence>
<evidence type="ECO:0000255" key="2">
    <source>
        <dbReference type="PROSITE-ProRule" id="PRU00704"/>
    </source>
</evidence>
<evidence type="ECO:0000269" key="3">
    <source>
    </source>
</evidence>
<evidence type="ECO:0000305" key="4"/>
<protein>
    <recommendedName>
        <fullName>Putative transcriptional regulator MtlR</fullName>
    </recommendedName>
    <domain>
        <recommendedName>
            <fullName>Putative phosphotransferase enzyme IIA component</fullName>
            <ecNumber>2.7.1.-</ecNumber>
        </recommendedName>
        <alternativeName>
            <fullName>Putative PTS system EIIA component</fullName>
        </alternativeName>
    </domain>
</protein>
<accession>Q02425</accession>
<name>MTLR_STRMU</name>
<comment type="function">
    <text evidence="3">Not necessary for mannitol utilization. May be involved in regulation of the mannitol phosphoenolpyruvate-dependent sugar phosphotransferase system (PTS).</text>
</comment>
<comment type="domain">
    <text>The PTS EIIA type-2 domain may serve a regulatory function, through its phosphorylation activity.</text>
</comment>
<keyword id="KW-0418">Kinase</keyword>
<keyword id="KW-0597">Phosphoprotein</keyword>
<keyword id="KW-1185">Reference proteome</keyword>
<keyword id="KW-0804">Transcription</keyword>
<keyword id="KW-0805">Transcription regulation</keyword>
<keyword id="KW-0808">Transferase</keyword>
<dbReference type="EC" id="2.7.1.-"/>
<dbReference type="EMBL" id="AF210133">
    <property type="protein sequence ID" value="AAA26940.2"/>
    <property type="molecule type" value="Genomic_DNA"/>
</dbReference>
<dbReference type="EMBL" id="AE014133">
    <property type="protein sequence ID" value="AAN58874.1"/>
    <property type="molecule type" value="Genomic_DNA"/>
</dbReference>
<dbReference type="PIR" id="A44798">
    <property type="entry name" value="A44798"/>
</dbReference>
<dbReference type="RefSeq" id="NP_721568.1">
    <property type="nucleotide sequence ID" value="NC_004350.2"/>
</dbReference>
<dbReference type="RefSeq" id="WP_002262166.1">
    <property type="nucleotide sequence ID" value="NC_004350.2"/>
</dbReference>
<dbReference type="SMR" id="Q02425"/>
<dbReference type="STRING" id="210007.SMU_1184c"/>
<dbReference type="KEGG" id="smu:SMU_1184c"/>
<dbReference type="PATRIC" id="fig|210007.7.peg.1062"/>
<dbReference type="eggNOG" id="COG3711">
    <property type="taxonomic scope" value="Bacteria"/>
</dbReference>
<dbReference type="HOGENOM" id="CLU_013442_2_2_9"/>
<dbReference type="OrthoDB" id="9776005at2"/>
<dbReference type="PhylomeDB" id="Q02425"/>
<dbReference type="Proteomes" id="UP000002512">
    <property type="component" value="Chromosome"/>
</dbReference>
<dbReference type="GO" id="GO:0016301">
    <property type="term" value="F:kinase activity"/>
    <property type="evidence" value="ECO:0007669"/>
    <property type="project" value="UniProtKB-KW"/>
</dbReference>
<dbReference type="GO" id="GO:0006355">
    <property type="term" value="P:regulation of DNA-templated transcription"/>
    <property type="evidence" value="ECO:0007669"/>
    <property type="project" value="InterPro"/>
</dbReference>
<dbReference type="Gene3D" id="3.40.930.10">
    <property type="entry name" value="Mannitol-specific EII, Chain A"/>
    <property type="match status" value="1"/>
</dbReference>
<dbReference type="Gene3D" id="1.10.10.10">
    <property type="entry name" value="Winged helix-like DNA-binding domain superfamily/Winged helix DNA-binding domain"/>
    <property type="match status" value="2"/>
</dbReference>
<dbReference type="InterPro" id="IPR050661">
    <property type="entry name" value="BglG_antiterminators"/>
</dbReference>
<dbReference type="InterPro" id="IPR007737">
    <property type="entry name" value="Mga_HTH"/>
</dbReference>
<dbReference type="InterPro" id="IPR011608">
    <property type="entry name" value="PRD"/>
</dbReference>
<dbReference type="InterPro" id="IPR016152">
    <property type="entry name" value="PTrfase/Anion_transptr"/>
</dbReference>
<dbReference type="InterPro" id="IPR002178">
    <property type="entry name" value="PTS_EIIA_type-2_dom"/>
</dbReference>
<dbReference type="InterPro" id="IPR036388">
    <property type="entry name" value="WH-like_DNA-bd_sf"/>
</dbReference>
<dbReference type="PANTHER" id="PTHR30185">
    <property type="entry name" value="CRYPTIC BETA-GLUCOSIDE BGL OPERON ANTITERMINATOR"/>
    <property type="match status" value="1"/>
</dbReference>
<dbReference type="PANTHER" id="PTHR30185:SF18">
    <property type="entry name" value="TRANSCRIPTIONAL REGULATOR MTLR"/>
    <property type="match status" value="1"/>
</dbReference>
<dbReference type="Pfam" id="PF05043">
    <property type="entry name" value="Mga"/>
    <property type="match status" value="1"/>
</dbReference>
<dbReference type="Pfam" id="PF00359">
    <property type="entry name" value="PTS_EIIA_2"/>
    <property type="match status" value="1"/>
</dbReference>
<dbReference type="SUPFAM" id="SSF55804">
    <property type="entry name" value="Phoshotransferase/anion transport protein"/>
    <property type="match status" value="1"/>
</dbReference>
<dbReference type="PROSITE" id="PS51372">
    <property type="entry name" value="PRD_2"/>
    <property type="match status" value="1"/>
</dbReference>
<dbReference type="PROSITE" id="PS51094">
    <property type="entry name" value="PTS_EIIA_TYPE_2"/>
    <property type="match status" value="1"/>
</dbReference>
<proteinExistence type="inferred from homology"/>
<gene>
    <name type="primary">mtlR</name>
    <name type="ordered locus">SMU_1184c</name>
</gene>
<organism>
    <name type="scientific">Streptococcus mutans serotype c (strain ATCC 700610 / UA159)</name>
    <dbReference type="NCBI Taxonomy" id="210007"/>
    <lineage>
        <taxon>Bacteria</taxon>
        <taxon>Bacillati</taxon>
        <taxon>Bacillota</taxon>
        <taxon>Bacilli</taxon>
        <taxon>Lactobacillales</taxon>
        <taxon>Streptococcaceae</taxon>
        <taxon>Streptococcus</taxon>
    </lineage>
</organism>
<reference key="1">
    <citation type="journal article" date="2000" name="Microbiology">
        <title>The mannitol-specific enzyme II (mtlA) gene and the mtlR gene of the PTS of Streptococcus mutans.</title>
        <authorList>
            <person name="Honeyman A.L."/>
            <person name="Curtiss R. III"/>
        </authorList>
    </citation>
    <scope>NUCLEOTIDE SEQUENCE [GENOMIC DNA]</scope>
    <scope>FUNCTION</scope>
    <source>
        <strain>ATCC 700611 / UA130 / Serotype c</strain>
    </source>
</reference>
<reference key="2">
    <citation type="journal article" date="2002" name="Proc. Natl. Acad. Sci. U.S.A.">
        <title>Genome sequence of Streptococcus mutans UA159, a cariogenic dental pathogen.</title>
        <authorList>
            <person name="Ajdic D.J."/>
            <person name="McShan W.M."/>
            <person name="McLaughlin R.E."/>
            <person name="Savic G."/>
            <person name="Chang J."/>
            <person name="Carson M.B."/>
            <person name="Primeaux C."/>
            <person name="Tian R."/>
            <person name="Kenton S."/>
            <person name="Jia H.G."/>
            <person name="Lin S.P."/>
            <person name="Qian Y."/>
            <person name="Li S."/>
            <person name="Zhu H."/>
            <person name="Najar F.Z."/>
            <person name="Lai H."/>
            <person name="White J."/>
            <person name="Roe B.A."/>
            <person name="Ferretti J.J."/>
        </authorList>
    </citation>
    <scope>NUCLEOTIDE SEQUENCE [LARGE SCALE GENOMIC DNA]</scope>
    <source>
        <strain>ATCC 700610 / UA159</strain>
    </source>
</reference>
<reference key="3">
    <citation type="journal article" date="1992" name="Infect. Immun.">
        <title>Isolation, characterization, and nucleotide sequence of the Streptococcus mutans mannitol-phosphate dehydrogenase gene and the mannitol-specific factor III gene of the phosphoenolpyruvate phosphotransferase system.</title>
        <authorList>
            <person name="Honeyman A.L."/>
            <person name="Curtiss R. III"/>
        </authorList>
    </citation>
    <scope>NUCLEOTIDE SEQUENCE [GENOMIC DNA] OF 525-650</scope>
    <source>
        <strain>ATCC 700611 / UA130 / Serotype c</strain>
    </source>
</reference>
<feature type="chain" id="PRO_0000096630" description="Putative transcriptional regulator MtlR">
    <location>
        <begin position="1"/>
        <end position="650"/>
    </location>
</feature>
<feature type="domain" description="PRD" evidence="2">
    <location>
        <begin position="276"/>
        <end position="382"/>
    </location>
</feature>
<feature type="domain" description="PTS EIIA type-2" evidence="1">
    <location>
        <begin position="490"/>
        <end position="640"/>
    </location>
</feature>
<feature type="modified residue" description="Phosphohistidine; by HPr" evidence="2">
    <location>
        <position position="556"/>
    </location>
</feature>
<feature type="sequence conflict" description="In Ref. 1; AAA26940." evidence="4" ref="1">
    <original>KEP</original>
    <variation>RES</variation>
    <location>
        <begin position="361"/>
        <end position="363"/>
    </location>
</feature>
<feature type="sequence conflict" description="In Ref. 1; AAA26940." evidence="4" ref="1">
    <original>V</original>
    <variation>A</variation>
    <location>
        <position position="441"/>
    </location>
</feature>
<feature type="sequence conflict" description="In Ref. 1; AAA26940." evidence="4" ref="1">
    <original>M</original>
    <variation>I</variation>
    <location>
        <position position="447"/>
    </location>
</feature>
<feature type="sequence conflict" description="In Ref. 1; AAA26940." evidence="4" ref="1">
    <original>K</original>
    <variation>R</variation>
    <location>
        <position position="482"/>
    </location>
</feature>
<feature type="sequence conflict" description="In Ref. 1; AAA26940 and 3; no nucleotide entry." evidence="4" ref="1 3">
    <original>C</original>
    <variation>R</variation>
    <location>
        <position position="539"/>
    </location>
</feature>
<feature type="sequence conflict" description="In Ref. 1; AAA26940 and 3; no nucleotide entry." evidence="4" ref="1 3">
    <original>H</original>
    <variation>R</variation>
    <location>
        <position position="551"/>
    </location>
</feature>
<feature type="sequence conflict" description="In Ref. 1; AAA26940 and 3; no nucleotide entry." evidence="4" ref="1 3">
    <original>L</original>
    <variation>P</variation>
    <location>
        <position position="620"/>
    </location>
</feature>